<name>ISPF_SHEB8</name>
<feature type="chain" id="PRO_1000022877" description="2-C-methyl-D-erythritol 2,4-cyclodiphosphate synthase">
    <location>
        <begin position="1"/>
        <end position="161"/>
    </location>
</feature>
<feature type="binding site" evidence="1">
    <location>
        <begin position="10"/>
        <end position="12"/>
    </location>
    <ligand>
        <name>4-CDP-2-C-methyl-D-erythritol 2-phosphate</name>
        <dbReference type="ChEBI" id="CHEBI:57919"/>
    </ligand>
</feature>
<feature type="binding site" evidence="1">
    <location>
        <position position="10"/>
    </location>
    <ligand>
        <name>a divalent metal cation</name>
        <dbReference type="ChEBI" id="CHEBI:60240"/>
    </ligand>
</feature>
<feature type="binding site" evidence="1">
    <location>
        <position position="12"/>
    </location>
    <ligand>
        <name>a divalent metal cation</name>
        <dbReference type="ChEBI" id="CHEBI:60240"/>
    </ligand>
</feature>
<feature type="binding site" evidence="1">
    <location>
        <begin position="36"/>
        <end position="37"/>
    </location>
    <ligand>
        <name>4-CDP-2-C-methyl-D-erythritol 2-phosphate</name>
        <dbReference type="ChEBI" id="CHEBI:57919"/>
    </ligand>
</feature>
<feature type="binding site" evidence="1">
    <location>
        <position position="44"/>
    </location>
    <ligand>
        <name>a divalent metal cation</name>
        <dbReference type="ChEBI" id="CHEBI:60240"/>
    </ligand>
</feature>
<feature type="binding site" evidence="1">
    <location>
        <begin position="58"/>
        <end position="60"/>
    </location>
    <ligand>
        <name>4-CDP-2-C-methyl-D-erythritol 2-phosphate</name>
        <dbReference type="ChEBI" id="CHEBI:57919"/>
    </ligand>
</feature>
<feature type="binding site" evidence="1">
    <location>
        <begin position="63"/>
        <end position="67"/>
    </location>
    <ligand>
        <name>4-CDP-2-C-methyl-D-erythritol 2-phosphate</name>
        <dbReference type="ChEBI" id="CHEBI:57919"/>
    </ligand>
</feature>
<feature type="binding site" evidence="1">
    <location>
        <begin position="102"/>
        <end position="108"/>
    </location>
    <ligand>
        <name>4-CDP-2-C-methyl-D-erythritol 2-phosphate</name>
        <dbReference type="ChEBI" id="CHEBI:57919"/>
    </ligand>
</feature>
<feature type="binding site" evidence="1">
    <location>
        <begin position="134"/>
        <end position="137"/>
    </location>
    <ligand>
        <name>4-CDP-2-C-methyl-D-erythritol 2-phosphate</name>
        <dbReference type="ChEBI" id="CHEBI:57919"/>
    </ligand>
</feature>
<feature type="binding site" evidence="1">
    <location>
        <position position="141"/>
    </location>
    <ligand>
        <name>4-CDP-2-C-methyl-D-erythritol 2-phosphate</name>
        <dbReference type="ChEBI" id="CHEBI:57919"/>
    </ligand>
</feature>
<feature type="binding site" evidence="1">
    <location>
        <position position="144"/>
    </location>
    <ligand>
        <name>4-CDP-2-C-methyl-D-erythritol 2-phosphate</name>
        <dbReference type="ChEBI" id="CHEBI:57919"/>
    </ligand>
</feature>
<feature type="site" description="Transition state stabilizer" evidence="1">
    <location>
        <position position="36"/>
    </location>
</feature>
<feature type="site" description="Transition state stabilizer" evidence="1">
    <location>
        <position position="135"/>
    </location>
</feature>
<reference key="1">
    <citation type="submission" date="2007-07" db="EMBL/GenBank/DDBJ databases">
        <title>Complete sequence of chromosome of Shewanella baltica OS185.</title>
        <authorList>
            <consortium name="US DOE Joint Genome Institute"/>
            <person name="Copeland A."/>
            <person name="Lucas S."/>
            <person name="Lapidus A."/>
            <person name="Barry K."/>
            <person name="Glavina del Rio T."/>
            <person name="Dalin E."/>
            <person name="Tice H."/>
            <person name="Pitluck S."/>
            <person name="Sims D."/>
            <person name="Brettin T."/>
            <person name="Bruce D."/>
            <person name="Detter J.C."/>
            <person name="Han C."/>
            <person name="Schmutz J."/>
            <person name="Larimer F."/>
            <person name="Land M."/>
            <person name="Hauser L."/>
            <person name="Kyrpides N."/>
            <person name="Mikhailova N."/>
            <person name="Brettar I."/>
            <person name="Rodrigues J."/>
            <person name="Konstantinidis K."/>
            <person name="Tiedje J."/>
            <person name="Richardson P."/>
        </authorList>
    </citation>
    <scope>NUCLEOTIDE SEQUENCE [LARGE SCALE GENOMIC DNA]</scope>
    <source>
        <strain>OS185</strain>
    </source>
</reference>
<organism>
    <name type="scientific">Shewanella baltica (strain OS185)</name>
    <dbReference type="NCBI Taxonomy" id="402882"/>
    <lineage>
        <taxon>Bacteria</taxon>
        <taxon>Pseudomonadati</taxon>
        <taxon>Pseudomonadota</taxon>
        <taxon>Gammaproteobacteria</taxon>
        <taxon>Alteromonadales</taxon>
        <taxon>Shewanellaceae</taxon>
        <taxon>Shewanella</taxon>
    </lineage>
</organism>
<keyword id="KW-0414">Isoprene biosynthesis</keyword>
<keyword id="KW-0456">Lyase</keyword>
<keyword id="KW-0479">Metal-binding</keyword>
<comment type="function">
    <text evidence="1">Involved in the biosynthesis of isopentenyl diphosphate (IPP) and dimethylallyl diphosphate (DMAPP), two major building blocks of isoprenoid compounds. Catalyzes the conversion of 4-diphosphocytidyl-2-C-methyl-D-erythritol 2-phosphate (CDP-ME2P) to 2-C-methyl-D-erythritol 2,4-cyclodiphosphate (ME-CPP) with a corresponding release of cytidine 5-monophosphate (CMP).</text>
</comment>
<comment type="catalytic activity">
    <reaction evidence="1">
        <text>4-CDP-2-C-methyl-D-erythritol 2-phosphate = 2-C-methyl-D-erythritol 2,4-cyclic diphosphate + CMP</text>
        <dbReference type="Rhea" id="RHEA:23864"/>
        <dbReference type="ChEBI" id="CHEBI:57919"/>
        <dbReference type="ChEBI" id="CHEBI:58483"/>
        <dbReference type="ChEBI" id="CHEBI:60377"/>
        <dbReference type="EC" id="4.6.1.12"/>
    </reaction>
</comment>
<comment type="cofactor">
    <cofactor evidence="1">
        <name>a divalent metal cation</name>
        <dbReference type="ChEBI" id="CHEBI:60240"/>
    </cofactor>
    <text evidence="1">Binds 1 divalent metal cation per subunit.</text>
</comment>
<comment type="pathway">
    <text evidence="1">Isoprenoid biosynthesis; isopentenyl diphosphate biosynthesis via DXP pathway; isopentenyl diphosphate from 1-deoxy-D-xylulose 5-phosphate: step 4/6.</text>
</comment>
<comment type="subunit">
    <text evidence="1">Homotrimer.</text>
</comment>
<comment type="similarity">
    <text evidence="1">Belongs to the IspF family.</text>
</comment>
<gene>
    <name evidence="1" type="primary">ispF</name>
    <name type="ordered locus">Shew185_3133</name>
</gene>
<accession>A6WR25</accession>
<dbReference type="EC" id="4.6.1.12" evidence="1"/>
<dbReference type="EMBL" id="CP000753">
    <property type="protein sequence ID" value="ABS09264.1"/>
    <property type="molecule type" value="Genomic_DNA"/>
</dbReference>
<dbReference type="RefSeq" id="WP_011847437.1">
    <property type="nucleotide sequence ID" value="NC_009665.1"/>
</dbReference>
<dbReference type="SMR" id="A6WR25"/>
<dbReference type="GeneID" id="11773329"/>
<dbReference type="KEGG" id="sbm:Shew185_3133"/>
<dbReference type="HOGENOM" id="CLU_084630_2_0_6"/>
<dbReference type="UniPathway" id="UPA00056">
    <property type="reaction ID" value="UER00095"/>
</dbReference>
<dbReference type="GO" id="GO:0008685">
    <property type="term" value="F:2-C-methyl-D-erythritol 2,4-cyclodiphosphate synthase activity"/>
    <property type="evidence" value="ECO:0007669"/>
    <property type="project" value="UniProtKB-UniRule"/>
</dbReference>
<dbReference type="GO" id="GO:0046872">
    <property type="term" value="F:metal ion binding"/>
    <property type="evidence" value="ECO:0007669"/>
    <property type="project" value="UniProtKB-KW"/>
</dbReference>
<dbReference type="GO" id="GO:0019288">
    <property type="term" value="P:isopentenyl diphosphate biosynthetic process, methylerythritol 4-phosphate pathway"/>
    <property type="evidence" value="ECO:0007669"/>
    <property type="project" value="UniProtKB-UniRule"/>
</dbReference>
<dbReference type="GO" id="GO:0016114">
    <property type="term" value="P:terpenoid biosynthetic process"/>
    <property type="evidence" value="ECO:0007669"/>
    <property type="project" value="InterPro"/>
</dbReference>
<dbReference type="CDD" id="cd00554">
    <property type="entry name" value="MECDP_synthase"/>
    <property type="match status" value="1"/>
</dbReference>
<dbReference type="FunFam" id="3.30.1330.50:FF:000001">
    <property type="entry name" value="2-C-methyl-D-erythritol 2,4-cyclodiphosphate synthase"/>
    <property type="match status" value="1"/>
</dbReference>
<dbReference type="Gene3D" id="3.30.1330.50">
    <property type="entry name" value="2-C-methyl-D-erythritol 2,4-cyclodiphosphate synthase"/>
    <property type="match status" value="1"/>
</dbReference>
<dbReference type="HAMAP" id="MF_00107">
    <property type="entry name" value="IspF"/>
    <property type="match status" value="1"/>
</dbReference>
<dbReference type="InterPro" id="IPR003526">
    <property type="entry name" value="MECDP_synthase"/>
</dbReference>
<dbReference type="InterPro" id="IPR020555">
    <property type="entry name" value="MECDP_synthase_CS"/>
</dbReference>
<dbReference type="InterPro" id="IPR036571">
    <property type="entry name" value="MECDP_synthase_sf"/>
</dbReference>
<dbReference type="NCBIfam" id="TIGR00151">
    <property type="entry name" value="ispF"/>
    <property type="match status" value="1"/>
</dbReference>
<dbReference type="PANTHER" id="PTHR43181">
    <property type="entry name" value="2-C-METHYL-D-ERYTHRITOL 2,4-CYCLODIPHOSPHATE SYNTHASE, CHLOROPLASTIC"/>
    <property type="match status" value="1"/>
</dbReference>
<dbReference type="PANTHER" id="PTHR43181:SF1">
    <property type="entry name" value="2-C-METHYL-D-ERYTHRITOL 2,4-CYCLODIPHOSPHATE SYNTHASE, CHLOROPLASTIC"/>
    <property type="match status" value="1"/>
</dbReference>
<dbReference type="Pfam" id="PF02542">
    <property type="entry name" value="YgbB"/>
    <property type="match status" value="1"/>
</dbReference>
<dbReference type="SUPFAM" id="SSF69765">
    <property type="entry name" value="IpsF-like"/>
    <property type="match status" value="1"/>
</dbReference>
<dbReference type="PROSITE" id="PS01350">
    <property type="entry name" value="ISPF"/>
    <property type="match status" value="1"/>
</dbReference>
<protein>
    <recommendedName>
        <fullName evidence="1">2-C-methyl-D-erythritol 2,4-cyclodiphosphate synthase</fullName>
        <shortName evidence="1">MECDP-synthase</shortName>
        <shortName evidence="1">MECPP-synthase</shortName>
        <shortName evidence="1">MECPS</shortName>
        <ecNumber evidence="1">4.6.1.12</ecNumber>
    </recommendedName>
</protein>
<sequence>MKIRIGHGFDVHKFGAARPLILCGVEVPYETGLIAHSDGDVVLHAISDAILGALALGDIGKHFPDTDTAYKGADSRVLLRHCYALARAKGFVLGNLDVTIIAQAPKMAPHIEAMRQILAADLTSELDDINVKATTTEQLGFTGRKEGIAVEAVVLMTRKHD</sequence>
<evidence type="ECO:0000255" key="1">
    <source>
        <dbReference type="HAMAP-Rule" id="MF_00107"/>
    </source>
</evidence>
<proteinExistence type="inferred from homology"/>